<evidence type="ECO:0000255" key="1">
    <source>
        <dbReference type="HAMAP-Rule" id="MF_03180"/>
    </source>
</evidence>
<sequence>MAFTNKSSYIALGCEGSANKLGIGVILHTPTETKILSNLRDTFVSPPGTGFLPKDTAAHHRAHFVRLAREALAEAKITPADVDCICYTKGPGMGAPLNSVAVAARALSLLWDRPLVGVNHCVGHIEMGRYITGAENPVVLYVSGGNSQVIAYAEQRYRIFGETLDIAVGNCLDRFARTLEISNDPAPGYNIEQLAKKGSKLLDIPYAVKGMDCSFSGILASADALAAQMKAGADFTPEDLCFSLQETVFAMLVEITERAMAHVGSSQVLIVGGVGCNERLQEMMGHMARERGGSVYATDERFCIDNGIMIAHAGLLAYETGFRTSLEESTCTQRFRTDEVFIKWRD</sequence>
<accession>Q4I5V2</accession>
<accession>A0A0E0SDG8</accession>
<accession>I1RTA5</accession>
<accession>V6RGI5</accession>
<reference key="1">
    <citation type="journal article" date="2007" name="Science">
        <title>The Fusarium graminearum genome reveals a link between localized polymorphism and pathogen specialization.</title>
        <authorList>
            <person name="Cuomo C.A."/>
            <person name="Gueldener U."/>
            <person name="Xu J.-R."/>
            <person name="Trail F."/>
            <person name="Turgeon B.G."/>
            <person name="Di Pietro A."/>
            <person name="Walton J.D."/>
            <person name="Ma L.-J."/>
            <person name="Baker S.E."/>
            <person name="Rep M."/>
            <person name="Adam G."/>
            <person name="Antoniw J."/>
            <person name="Baldwin T."/>
            <person name="Calvo S.E."/>
            <person name="Chang Y.-L."/>
            <person name="DeCaprio D."/>
            <person name="Gale L.R."/>
            <person name="Gnerre S."/>
            <person name="Goswami R.S."/>
            <person name="Hammond-Kosack K."/>
            <person name="Harris L.J."/>
            <person name="Hilburn K."/>
            <person name="Kennell J.C."/>
            <person name="Kroken S."/>
            <person name="Magnuson J.K."/>
            <person name="Mannhaupt G."/>
            <person name="Mauceli E.W."/>
            <person name="Mewes H.-W."/>
            <person name="Mitterbauer R."/>
            <person name="Muehlbauer G."/>
            <person name="Muensterkoetter M."/>
            <person name="Nelson D."/>
            <person name="O'Donnell K."/>
            <person name="Ouellet T."/>
            <person name="Qi W."/>
            <person name="Quesneville H."/>
            <person name="Roncero M.I.G."/>
            <person name="Seong K.-Y."/>
            <person name="Tetko I.V."/>
            <person name="Urban M."/>
            <person name="Waalwijk C."/>
            <person name="Ward T.J."/>
            <person name="Yao J."/>
            <person name="Birren B.W."/>
            <person name="Kistler H.C."/>
        </authorList>
    </citation>
    <scope>NUCLEOTIDE SEQUENCE [LARGE SCALE GENOMIC DNA]</scope>
    <source>
        <strain>ATCC MYA-4620 / CBS 123657 / FGSC 9075 / NRRL 31084 / PH-1</strain>
    </source>
</reference>
<reference key="2">
    <citation type="journal article" date="2010" name="Nature">
        <title>Comparative genomics reveals mobile pathogenicity chromosomes in Fusarium.</title>
        <authorList>
            <person name="Ma L.-J."/>
            <person name="van der Does H.C."/>
            <person name="Borkovich K.A."/>
            <person name="Coleman J.J."/>
            <person name="Daboussi M.-J."/>
            <person name="Di Pietro A."/>
            <person name="Dufresne M."/>
            <person name="Freitag M."/>
            <person name="Grabherr M."/>
            <person name="Henrissat B."/>
            <person name="Houterman P.M."/>
            <person name="Kang S."/>
            <person name="Shim W.-B."/>
            <person name="Woloshuk C."/>
            <person name="Xie X."/>
            <person name="Xu J.-R."/>
            <person name="Antoniw J."/>
            <person name="Baker S.E."/>
            <person name="Bluhm B.H."/>
            <person name="Breakspear A."/>
            <person name="Brown D.W."/>
            <person name="Butchko R.A.E."/>
            <person name="Chapman S."/>
            <person name="Coulson R."/>
            <person name="Coutinho P.M."/>
            <person name="Danchin E.G.J."/>
            <person name="Diener A."/>
            <person name="Gale L.R."/>
            <person name="Gardiner D.M."/>
            <person name="Goff S."/>
            <person name="Hammond-Kosack K.E."/>
            <person name="Hilburn K."/>
            <person name="Hua-Van A."/>
            <person name="Jonkers W."/>
            <person name="Kazan K."/>
            <person name="Kodira C.D."/>
            <person name="Koehrsen M."/>
            <person name="Kumar L."/>
            <person name="Lee Y.-H."/>
            <person name="Li L."/>
            <person name="Manners J.M."/>
            <person name="Miranda-Saavedra D."/>
            <person name="Mukherjee M."/>
            <person name="Park G."/>
            <person name="Park J."/>
            <person name="Park S.-Y."/>
            <person name="Proctor R.H."/>
            <person name="Regev A."/>
            <person name="Ruiz-Roldan M.C."/>
            <person name="Sain D."/>
            <person name="Sakthikumar S."/>
            <person name="Sykes S."/>
            <person name="Schwartz D.C."/>
            <person name="Turgeon B.G."/>
            <person name="Wapinski I."/>
            <person name="Yoder O."/>
            <person name="Young S."/>
            <person name="Zeng Q."/>
            <person name="Zhou S."/>
            <person name="Galagan J."/>
            <person name="Cuomo C.A."/>
            <person name="Kistler H.C."/>
            <person name="Rep M."/>
        </authorList>
    </citation>
    <scope>GENOME REANNOTATION</scope>
    <source>
        <strain>ATCC MYA-4620 / CBS 123657 / FGSC 9075 / NRRL 31084 / PH-1</strain>
    </source>
</reference>
<reference key="3">
    <citation type="journal article" date="2015" name="BMC Genomics">
        <title>The completed genome sequence of the pathogenic ascomycete fungus Fusarium graminearum.</title>
        <authorList>
            <person name="King R."/>
            <person name="Urban M."/>
            <person name="Hammond-Kosack M.C.U."/>
            <person name="Hassani-Pak K."/>
            <person name="Hammond-Kosack K.E."/>
        </authorList>
    </citation>
    <scope>NUCLEOTIDE SEQUENCE [LARGE SCALE GENOMIC DNA]</scope>
    <source>
        <strain>ATCC MYA-4620 / CBS 123657 / FGSC 9075 / NRRL 31084 / PH-1</strain>
    </source>
</reference>
<dbReference type="EC" id="2.3.1.234" evidence="1"/>
<dbReference type="EMBL" id="DS231666">
    <property type="protein sequence ID" value="ESU13668.1"/>
    <property type="molecule type" value="Genomic_DNA"/>
</dbReference>
<dbReference type="EMBL" id="HG970335">
    <property type="protein sequence ID" value="CEF84481.1"/>
    <property type="molecule type" value="Genomic_DNA"/>
</dbReference>
<dbReference type="RefSeq" id="XP_011327175.1">
    <property type="nucleotide sequence ID" value="XM_011328873.1"/>
</dbReference>
<dbReference type="SMR" id="Q4I5V2"/>
<dbReference type="FunCoup" id="Q4I5V2">
    <property type="interactions" value="600"/>
</dbReference>
<dbReference type="STRING" id="229533.Q4I5V2"/>
<dbReference type="GeneID" id="23554484"/>
<dbReference type="KEGG" id="fgr:FGSG_07406"/>
<dbReference type="VEuPathDB" id="FungiDB:FGRAMPH1_01G24749"/>
<dbReference type="eggNOG" id="KOG2708">
    <property type="taxonomic scope" value="Eukaryota"/>
</dbReference>
<dbReference type="HOGENOM" id="CLU_023208_2_2_1"/>
<dbReference type="InParanoid" id="Q4I5V2"/>
<dbReference type="OrthoDB" id="45418at110618"/>
<dbReference type="Proteomes" id="UP000070720">
    <property type="component" value="Chromosome 4"/>
</dbReference>
<dbReference type="GO" id="GO:0005737">
    <property type="term" value="C:cytoplasm"/>
    <property type="evidence" value="ECO:0007669"/>
    <property type="project" value="UniProtKB-SubCell"/>
</dbReference>
<dbReference type="GO" id="GO:0000408">
    <property type="term" value="C:EKC/KEOPS complex"/>
    <property type="evidence" value="ECO:0007669"/>
    <property type="project" value="InterPro"/>
</dbReference>
<dbReference type="GO" id="GO:0005634">
    <property type="term" value="C:nucleus"/>
    <property type="evidence" value="ECO:0007669"/>
    <property type="project" value="UniProtKB-SubCell"/>
</dbReference>
<dbReference type="GO" id="GO:0046872">
    <property type="term" value="F:metal ion binding"/>
    <property type="evidence" value="ECO:0007669"/>
    <property type="project" value="UniProtKB-KW"/>
</dbReference>
<dbReference type="GO" id="GO:0061711">
    <property type="term" value="F:N(6)-L-threonylcarbamoyladenine synthase activity"/>
    <property type="evidence" value="ECO:0007669"/>
    <property type="project" value="UniProtKB-EC"/>
</dbReference>
<dbReference type="GO" id="GO:0002949">
    <property type="term" value="P:tRNA threonylcarbamoyladenosine modification"/>
    <property type="evidence" value="ECO:0007669"/>
    <property type="project" value="UniProtKB-UniRule"/>
</dbReference>
<dbReference type="CDD" id="cd24132">
    <property type="entry name" value="ASKHA_NBD_OSGEP_like_euk"/>
    <property type="match status" value="1"/>
</dbReference>
<dbReference type="FunFam" id="3.30.420.40:FF:000038">
    <property type="entry name" value="Probable tRNA N6-adenosine threonylcarbamoyltransferase"/>
    <property type="match status" value="1"/>
</dbReference>
<dbReference type="FunFam" id="3.30.420.40:FF:000295">
    <property type="entry name" value="Probable tRNA N6-adenosine threonylcarbamoyltransferase"/>
    <property type="match status" value="1"/>
</dbReference>
<dbReference type="Gene3D" id="3.30.420.40">
    <property type="match status" value="2"/>
</dbReference>
<dbReference type="HAMAP" id="MF_01446">
    <property type="entry name" value="Kae1"/>
    <property type="match status" value="1"/>
</dbReference>
<dbReference type="InterPro" id="IPR043129">
    <property type="entry name" value="ATPase_NBD"/>
</dbReference>
<dbReference type="InterPro" id="IPR000905">
    <property type="entry name" value="Gcp-like_dom"/>
</dbReference>
<dbReference type="InterPro" id="IPR017861">
    <property type="entry name" value="KAE1/TsaD"/>
</dbReference>
<dbReference type="InterPro" id="IPR034680">
    <property type="entry name" value="Kae1_archaea_euk"/>
</dbReference>
<dbReference type="InterPro" id="IPR017860">
    <property type="entry name" value="Peptidase_M22_CS"/>
</dbReference>
<dbReference type="NCBIfam" id="TIGR03722">
    <property type="entry name" value="arch_KAE1"/>
    <property type="match status" value="1"/>
</dbReference>
<dbReference type="NCBIfam" id="TIGR00329">
    <property type="entry name" value="gcp_kae1"/>
    <property type="match status" value="1"/>
</dbReference>
<dbReference type="PANTHER" id="PTHR11735">
    <property type="entry name" value="TRNA N6-ADENOSINE THREONYLCARBAMOYLTRANSFERASE"/>
    <property type="match status" value="1"/>
</dbReference>
<dbReference type="PANTHER" id="PTHR11735:SF14">
    <property type="entry name" value="TRNA N6-ADENOSINE THREONYLCARBAMOYLTRANSFERASE"/>
    <property type="match status" value="1"/>
</dbReference>
<dbReference type="Pfam" id="PF00814">
    <property type="entry name" value="TsaD"/>
    <property type="match status" value="1"/>
</dbReference>
<dbReference type="PRINTS" id="PR00789">
    <property type="entry name" value="OSIALOPTASE"/>
</dbReference>
<dbReference type="SUPFAM" id="SSF53067">
    <property type="entry name" value="Actin-like ATPase domain"/>
    <property type="match status" value="1"/>
</dbReference>
<dbReference type="PROSITE" id="PS01016">
    <property type="entry name" value="GLYCOPROTEASE"/>
    <property type="match status" value="1"/>
</dbReference>
<comment type="function">
    <text evidence="1">Component of the EKC/KEOPS complex that is required for the formation of a threonylcarbamoyl group on adenosine at position 37 (t(6)A37) in tRNAs that read codons beginning with adenine. The complex is probably involved in the transfer of the threonylcarbamoyl moiety of threonylcarbamoyl-AMP (TC-AMP) to the N6 group of A37. KAE1 likely plays a direct catalytic role in this reaction, but requires other protein(s) of the complex to fulfill this activity. The EKC/KEOPS complex also promotes both telomere uncapping and telomere elongation. The complex is required for efficient recruitment of transcriptional coactivators.</text>
</comment>
<comment type="catalytic activity">
    <reaction evidence="1">
        <text>L-threonylcarbamoyladenylate + adenosine(37) in tRNA = N(6)-L-threonylcarbamoyladenosine(37) in tRNA + AMP + H(+)</text>
        <dbReference type="Rhea" id="RHEA:37059"/>
        <dbReference type="Rhea" id="RHEA-COMP:10162"/>
        <dbReference type="Rhea" id="RHEA-COMP:10163"/>
        <dbReference type="ChEBI" id="CHEBI:15378"/>
        <dbReference type="ChEBI" id="CHEBI:73682"/>
        <dbReference type="ChEBI" id="CHEBI:74411"/>
        <dbReference type="ChEBI" id="CHEBI:74418"/>
        <dbReference type="ChEBI" id="CHEBI:456215"/>
        <dbReference type="EC" id="2.3.1.234"/>
    </reaction>
</comment>
<comment type="cofactor">
    <cofactor evidence="1">
        <name>a divalent metal cation</name>
        <dbReference type="ChEBI" id="CHEBI:60240"/>
    </cofactor>
    <text evidence="1">Binds 1 divalent metal cation per subunit.</text>
</comment>
<comment type="subunit">
    <text evidence="1">Component of the EKC/KEOPS complex composed of at least BUD32, CGI121, GON7, KAE1 and PCC1; the whole complex dimerizes.</text>
</comment>
<comment type="subcellular location">
    <subcellularLocation>
        <location evidence="1">Cytoplasm</location>
    </subcellularLocation>
    <subcellularLocation>
        <location evidence="1">Nucleus</location>
    </subcellularLocation>
</comment>
<comment type="similarity">
    <text evidence="1">Belongs to the KAE1 / TsaD family.</text>
</comment>
<proteinExistence type="inferred from homology"/>
<name>KAE1_GIBZE</name>
<keyword id="KW-0010">Activator</keyword>
<keyword id="KW-0012">Acyltransferase</keyword>
<keyword id="KW-0963">Cytoplasm</keyword>
<keyword id="KW-0479">Metal-binding</keyword>
<keyword id="KW-0539">Nucleus</keyword>
<keyword id="KW-1185">Reference proteome</keyword>
<keyword id="KW-0804">Transcription</keyword>
<keyword id="KW-0805">Transcription regulation</keyword>
<keyword id="KW-0808">Transferase</keyword>
<keyword id="KW-0819">tRNA processing</keyword>
<gene>
    <name evidence="1" type="primary">KAE1</name>
    <name type="ORF">FGRRES_07406</name>
    <name type="ORF">FGSG_07406</name>
</gene>
<feature type="chain" id="PRO_0000278937" description="tRNA N6-adenosine threonylcarbamoyltransferase">
    <location>
        <begin position="1"/>
        <end position="346"/>
    </location>
</feature>
<feature type="binding site" evidence="1">
    <location>
        <position position="120"/>
    </location>
    <ligand>
        <name>a divalent metal cation</name>
        <dbReference type="ChEBI" id="CHEBI:60240"/>
    </ligand>
</feature>
<feature type="binding site" evidence="1">
    <location>
        <position position="124"/>
    </location>
    <ligand>
        <name>a divalent metal cation</name>
        <dbReference type="ChEBI" id="CHEBI:60240"/>
    </ligand>
</feature>
<feature type="binding site" evidence="1">
    <location>
        <begin position="141"/>
        <end position="145"/>
    </location>
    <ligand>
        <name>substrate</name>
    </ligand>
</feature>
<feature type="binding site" evidence="1">
    <location>
        <position position="141"/>
    </location>
    <ligand>
        <name>a divalent metal cation</name>
        <dbReference type="ChEBI" id="CHEBI:60240"/>
    </ligand>
</feature>
<feature type="binding site" evidence="1">
    <location>
        <position position="173"/>
    </location>
    <ligand>
        <name>substrate</name>
    </ligand>
</feature>
<feature type="binding site" evidence="1">
    <location>
        <position position="188"/>
    </location>
    <ligand>
        <name>substrate</name>
    </ligand>
</feature>
<feature type="binding site" evidence="1">
    <location>
        <position position="192"/>
    </location>
    <ligand>
        <name>substrate</name>
    </ligand>
</feature>
<feature type="binding site" evidence="1">
    <location>
        <position position="277"/>
    </location>
    <ligand>
        <name>substrate</name>
    </ligand>
</feature>
<feature type="binding site" evidence="1">
    <location>
        <position position="305"/>
    </location>
    <ligand>
        <name>a divalent metal cation</name>
        <dbReference type="ChEBI" id="CHEBI:60240"/>
    </ligand>
</feature>
<organism>
    <name type="scientific">Gibberella zeae (strain ATCC MYA-4620 / CBS 123657 / FGSC 9075 / NRRL 31084 / PH-1)</name>
    <name type="common">Wheat head blight fungus</name>
    <name type="synonym">Fusarium graminearum</name>
    <dbReference type="NCBI Taxonomy" id="229533"/>
    <lineage>
        <taxon>Eukaryota</taxon>
        <taxon>Fungi</taxon>
        <taxon>Dikarya</taxon>
        <taxon>Ascomycota</taxon>
        <taxon>Pezizomycotina</taxon>
        <taxon>Sordariomycetes</taxon>
        <taxon>Hypocreomycetidae</taxon>
        <taxon>Hypocreales</taxon>
        <taxon>Nectriaceae</taxon>
        <taxon>Fusarium</taxon>
    </lineage>
</organism>
<protein>
    <recommendedName>
        <fullName evidence="1">tRNA N6-adenosine threonylcarbamoyltransferase</fullName>
        <ecNumber evidence="1">2.3.1.234</ecNumber>
    </recommendedName>
    <alternativeName>
        <fullName>N6-L-threonylcarbamoyladenine synthase</fullName>
        <shortName>t(6)A synthase</shortName>
    </alternativeName>
    <alternativeName>
        <fullName evidence="1">t(6)A37 threonylcarbamoyladenosine biosynthesis protein KAE1</fullName>
    </alternativeName>
    <alternativeName>
        <fullName evidence="1">tRNA threonylcarbamoyladenosine biosynthesis protein KAE1</fullName>
    </alternativeName>
</protein>